<sequence length="105" mass="12266">MADWNGEYISPYAEHGKKSEQVKKITVSIPIKVLEILTNERTRRQIRNLRHATNSELLCEAFLHAFTGQPLPTDDDLMKERSNEIPEEAKLKMRELGIDPDKWQY</sequence>
<reference key="1">
    <citation type="journal article" date="2009" name="J. Bacteriol.">
        <title>Complete genome sequence of Haemophilus parasuis SH0165.</title>
        <authorList>
            <person name="Yue M."/>
            <person name="Yang F."/>
            <person name="Yang J."/>
            <person name="Bei W."/>
            <person name="Cai X."/>
            <person name="Chen L."/>
            <person name="Dong J."/>
            <person name="Zhou R."/>
            <person name="Jin M."/>
            <person name="Jin Q."/>
            <person name="Chen H."/>
        </authorList>
    </citation>
    <scope>NUCLEOTIDE SEQUENCE [LARGE SCALE GENOMIC DNA]</scope>
    <source>
        <strain>SH0165</strain>
    </source>
</reference>
<comment type="function">
    <text evidence="1">This regulatory protein, when combined with SAM (S-adenosylmethionine) represses the expression of the methionine regulon and of enzymes involved in SAM synthesis.</text>
</comment>
<comment type="subunit">
    <text evidence="1">Homodimer.</text>
</comment>
<comment type="subcellular location">
    <subcellularLocation>
        <location evidence="1">Cytoplasm</location>
    </subcellularLocation>
</comment>
<comment type="domain">
    <text>Does not bind DNA by a helix-turn-helix motif.</text>
</comment>
<comment type="similarity">
    <text evidence="1">Belongs to the MetJ family.</text>
</comment>
<dbReference type="EMBL" id="CP001321">
    <property type="protein sequence ID" value="ACL33534.1"/>
    <property type="molecule type" value="Genomic_DNA"/>
</dbReference>
<dbReference type="RefSeq" id="WP_005711435.1">
    <property type="nucleotide sequence ID" value="NC_011852.1"/>
</dbReference>
<dbReference type="SMR" id="B8F882"/>
<dbReference type="STRING" id="557723.HAPS_2077"/>
<dbReference type="GeneID" id="66619522"/>
<dbReference type="KEGG" id="hap:HAPS_2077"/>
<dbReference type="HOGENOM" id="CLU_142318_0_0_6"/>
<dbReference type="Proteomes" id="UP000006743">
    <property type="component" value="Chromosome"/>
</dbReference>
<dbReference type="GO" id="GO:0005737">
    <property type="term" value="C:cytoplasm"/>
    <property type="evidence" value="ECO:0007669"/>
    <property type="project" value="UniProtKB-SubCell"/>
</dbReference>
<dbReference type="GO" id="GO:0003677">
    <property type="term" value="F:DNA binding"/>
    <property type="evidence" value="ECO:0007669"/>
    <property type="project" value="UniProtKB-KW"/>
</dbReference>
<dbReference type="GO" id="GO:0003700">
    <property type="term" value="F:DNA-binding transcription factor activity"/>
    <property type="evidence" value="ECO:0007669"/>
    <property type="project" value="InterPro"/>
</dbReference>
<dbReference type="GO" id="GO:0009086">
    <property type="term" value="P:methionine biosynthetic process"/>
    <property type="evidence" value="ECO:0007669"/>
    <property type="project" value="UniProtKB-UniRule"/>
</dbReference>
<dbReference type="GO" id="GO:0045892">
    <property type="term" value="P:negative regulation of DNA-templated transcription"/>
    <property type="evidence" value="ECO:0007669"/>
    <property type="project" value="UniProtKB-UniRule"/>
</dbReference>
<dbReference type="Gene3D" id="1.10.140.10">
    <property type="entry name" value="MET Apo-Repressor, subunit A"/>
    <property type="match status" value="1"/>
</dbReference>
<dbReference type="HAMAP" id="MF_00744">
    <property type="entry name" value="MetJ"/>
    <property type="match status" value="1"/>
</dbReference>
<dbReference type="InterPro" id="IPR002084">
    <property type="entry name" value="Met_repressor_MetJ"/>
</dbReference>
<dbReference type="InterPro" id="IPR023453">
    <property type="entry name" value="Met_repressor_MetJ_dom_sf"/>
</dbReference>
<dbReference type="InterPro" id="IPR010985">
    <property type="entry name" value="Ribbon_hlx_hlx"/>
</dbReference>
<dbReference type="NCBIfam" id="NF003622">
    <property type="entry name" value="PRK05264.1"/>
    <property type="match status" value="1"/>
</dbReference>
<dbReference type="Pfam" id="PF01340">
    <property type="entry name" value="MetJ"/>
    <property type="match status" value="1"/>
</dbReference>
<dbReference type="SUPFAM" id="SSF47598">
    <property type="entry name" value="Ribbon-helix-helix"/>
    <property type="match status" value="1"/>
</dbReference>
<gene>
    <name evidence="1" type="primary">metJ</name>
    <name type="ordered locus">HAPS_2077</name>
</gene>
<feature type="chain" id="PRO_1000148314" description="Met repressor">
    <location>
        <begin position="1"/>
        <end position="105"/>
    </location>
</feature>
<protein>
    <recommendedName>
        <fullName evidence="1">Met repressor</fullName>
    </recommendedName>
    <alternativeName>
        <fullName evidence="1">Met regulon regulatory protein MetJ</fullName>
    </alternativeName>
</protein>
<evidence type="ECO:0000255" key="1">
    <source>
        <dbReference type="HAMAP-Rule" id="MF_00744"/>
    </source>
</evidence>
<keyword id="KW-0028">Amino-acid biosynthesis</keyword>
<keyword id="KW-0963">Cytoplasm</keyword>
<keyword id="KW-0238">DNA-binding</keyword>
<keyword id="KW-0486">Methionine biosynthesis</keyword>
<keyword id="KW-1185">Reference proteome</keyword>
<keyword id="KW-0678">Repressor</keyword>
<keyword id="KW-0804">Transcription</keyword>
<keyword id="KW-0805">Transcription regulation</keyword>
<accession>B8F882</accession>
<name>METJ_GLAP5</name>
<organism>
    <name type="scientific">Glaesserella parasuis serovar 5 (strain SH0165)</name>
    <name type="common">Haemophilus parasuis</name>
    <dbReference type="NCBI Taxonomy" id="557723"/>
    <lineage>
        <taxon>Bacteria</taxon>
        <taxon>Pseudomonadati</taxon>
        <taxon>Pseudomonadota</taxon>
        <taxon>Gammaproteobacteria</taxon>
        <taxon>Pasteurellales</taxon>
        <taxon>Pasteurellaceae</taxon>
        <taxon>Glaesserella</taxon>
    </lineage>
</organism>
<proteinExistence type="inferred from homology"/>